<proteinExistence type="evidence at transcript level"/>
<keyword id="KW-0025">Alternative splicing</keyword>
<keyword id="KW-0342">GTP-binding</keyword>
<keyword id="KW-0378">Hydrolase</keyword>
<keyword id="KW-0460">Magnesium</keyword>
<keyword id="KW-0479">Metal-binding</keyword>
<keyword id="KW-0496">Mitochondrion</keyword>
<keyword id="KW-0547">Nucleotide-binding</keyword>
<keyword id="KW-0630">Potassium</keyword>
<keyword id="KW-1185">Reference proteome</keyword>
<keyword id="KW-0809">Transit peptide</keyword>
<keyword id="KW-0819">tRNA processing</keyword>
<sequence length="492" mass="52175">MWRGLSALVTQAAWAPLRLCARCSTSAESLVPSSTIFALSSGQGRCAIAVIRTSGPASGLALRSLTALQEPPPARRACLRLLRHPCSGEPLDRSLVLWFPGPQSFTGEDCVEFHVHGGPAVVSGVLQALGSVPGLRPAEAGEFTRRAFAHGKLSLTEVEGLADLIRAETEAQRRQALRQLDGELSQLCQGWAKTLTKALAYVEAYIDFGEDDNLEEGVLEQADREVRALEVALGSHLRDARRGQRLLSGANVVVTGPPNAGKSSLVNLLSQKPVSIVSPEPGTTRDVLETPVDLAGFPVLLSDTAGLREGVGAVEQEGVRRARHRLEQADIILGVLDASDLASSSSCSFLDTVVTPLLAQSQDSGGQRLLLLLNKSDLLSANAPACDIALPPHLLLSCHTGAGMDSLLQALKTELAAVCGDPSTGPPLLTRVRHQYHLQGCLDALGHYQLATDLALAAEALRQARRQLNHLTGGGGTEEILDLIFQDFCVGK</sequence>
<feature type="transit peptide" description="Mitochondrion" evidence="2">
    <location>
        <begin position="1"/>
        <end position="20"/>
    </location>
</feature>
<feature type="chain" id="PRO_0000280266" description="5-taurinomethyluridine-[tRNA] synthase subunit GTPB3, mitochondrial">
    <location>
        <begin position="21"/>
        <end position="492"/>
    </location>
</feature>
<feature type="domain" description="TrmE-type G">
    <location>
        <begin position="249"/>
        <end position="416"/>
    </location>
</feature>
<feature type="binding site" evidence="2">
    <location>
        <position position="52"/>
    </location>
    <ligand>
        <name>5,10-methylenetetrahydrofolate</name>
        <dbReference type="ChEBI" id="CHEBI:12071"/>
    </ligand>
</feature>
<feature type="binding site" evidence="2">
    <location>
        <position position="112"/>
    </location>
    <ligand>
        <name>5,10-methylenetetrahydrofolate</name>
        <dbReference type="ChEBI" id="CHEBI:12071"/>
    </ligand>
</feature>
<feature type="binding site" evidence="2">
    <location>
        <position position="152"/>
    </location>
    <ligand>
        <name>5,10-methylenetetrahydrofolate</name>
        <dbReference type="ChEBI" id="CHEBI:12071"/>
    </ligand>
</feature>
<feature type="binding site" evidence="3">
    <location>
        <begin position="256"/>
        <end position="263"/>
    </location>
    <ligand>
        <name>GTP</name>
        <dbReference type="ChEBI" id="CHEBI:37565"/>
    </ligand>
</feature>
<feature type="binding site" evidence="1">
    <location>
        <position position="259"/>
    </location>
    <ligand>
        <name>K(+)</name>
        <dbReference type="ChEBI" id="CHEBI:29103"/>
    </ligand>
</feature>
<feature type="binding site" evidence="3">
    <location>
        <position position="263"/>
    </location>
    <ligand>
        <name>Mg(2+)</name>
        <dbReference type="ChEBI" id="CHEBI:18420"/>
    </ligand>
</feature>
<feature type="binding site" evidence="3">
    <location>
        <begin position="282"/>
        <end position="286"/>
    </location>
    <ligand>
        <name>GTP</name>
        <dbReference type="ChEBI" id="CHEBI:37565"/>
    </ligand>
</feature>
<feature type="binding site" evidence="3">
    <location>
        <position position="284"/>
    </location>
    <ligand>
        <name>Mg(2+)</name>
        <dbReference type="ChEBI" id="CHEBI:18420"/>
    </ligand>
</feature>
<feature type="binding site" evidence="3">
    <location>
        <begin position="303"/>
        <end position="306"/>
    </location>
    <ligand>
        <name>GTP</name>
        <dbReference type="ChEBI" id="CHEBI:37565"/>
    </ligand>
</feature>
<feature type="binding site" evidence="3">
    <location>
        <begin position="374"/>
        <end position="377"/>
    </location>
    <ligand>
        <name>GTP</name>
        <dbReference type="ChEBI" id="CHEBI:37565"/>
    </ligand>
</feature>
<feature type="binding site" evidence="2">
    <location>
        <position position="492"/>
    </location>
    <ligand>
        <name>5,10-methylenetetrahydrofolate</name>
        <dbReference type="ChEBI" id="CHEBI:12071"/>
    </ligand>
</feature>
<feature type="splice variant" id="VSP_023585" description="In isoform 2." evidence="5">
    <original>ALAYVEAYIDFGEDDNLEEGVLEQADREVRALEVALGSHLRDAR</original>
    <variation>RTEKFEPWRWRWVPTCEMLGVDKGSSRGQMLWSLDLPMRARAVW</variation>
    <location>
        <begin position="198"/>
        <end position="241"/>
    </location>
</feature>
<feature type="splice variant" id="VSP_023586" description="In isoform 2." evidence="5">
    <location>
        <begin position="242"/>
        <end position="492"/>
    </location>
</feature>
<evidence type="ECO:0000250" key="1">
    <source>
        <dbReference type="UniProtKB" id="P25522"/>
    </source>
</evidence>
<evidence type="ECO:0000250" key="2">
    <source>
        <dbReference type="UniProtKB" id="Q969Y2"/>
    </source>
</evidence>
<evidence type="ECO:0000255" key="3">
    <source>
        <dbReference type="PROSITE-ProRule" id="PRU01046"/>
    </source>
</evidence>
<evidence type="ECO:0000269" key="4">
    <source>
    </source>
</evidence>
<evidence type="ECO:0000303" key="5">
    <source>
    </source>
</evidence>
<evidence type="ECO:0000305" key="6"/>
<evidence type="ECO:0000312" key="7">
    <source>
        <dbReference type="MGI" id="MGI:1917609"/>
    </source>
</evidence>
<comment type="function">
    <text evidence="2">GTPase component of the GTPBP3-MTO1 complex that catalyzes the 5-taurinomethyluridine (taum(5)U) modification at the 34th wobble position (U34) of mitochondrial tRNAs (mt-tRNAs), which plays a role in mt-tRNA decoding and mitochondrial translation. Taum(5)U formation on mammalian mt-tRNA requires the presence of both GTPBP3-mediated GTPase activity and MTO1 catalytic activity.</text>
</comment>
<comment type="catalytic activity">
    <reaction evidence="2">
        <text>GTP + H2O = GDP + phosphate + H(+)</text>
        <dbReference type="Rhea" id="RHEA:19669"/>
        <dbReference type="ChEBI" id="CHEBI:15377"/>
        <dbReference type="ChEBI" id="CHEBI:15378"/>
        <dbReference type="ChEBI" id="CHEBI:37565"/>
        <dbReference type="ChEBI" id="CHEBI:43474"/>
        <dbReference type="ChEBI" id="CHEBI:58189"/>
    </reaction>
    <physiologicalReaction direction="left-to-right" evidence="2">
        <dbReference type="Rhea" id="RHEA:19670"/>
    </physiologicalReaction>
</comment>
<comment type="cofactor">
    <cofactor evidence="2">
        <name>K(+)</name>
        <dbReference type="ChEBI" id="CHEBI:29103"/>
    </cofactor>
    <text evidence="2">Forms a homodimer in the presence of potassium.</text>
</comment>
<comment type="subunit">
    <text evidence="2">Homodimer; forms a dimer in the presence of potassium. Interacts with MTO1; forms the GTPBP3-MTO1 complex composed of homodimers of GTPBP3 and MTO1.</text>
</comment>
<comment type="subcellular location">
    <subcellularLocation>
        <location evidence="4">Mitochondrion</location>
    </subcellularLocation>
</comment>
<comment type="alternative products">
    <event type="alternative splicing"/>
    <isoform>
        <id>Q923K4-1</id>
        <name>1</name>
        <sequence type="displayed"/>
    </isoform>
    <isoform>
        <id>Q923K4-2</id>
        <name>2</name>
        <sequence type="described" ref="VSP_023585 VSP_023586"/>
    </isoform>
</comment>
<comment type="tissue specificity">
    <text evidence="4">Ubiquitously expressed. Highly expressed in tissues with high metabolic rates including heart, liver and brain. Weakly expressed in skeletal muscle.</text>
</comment>
<comment type="similarity">
    <text evidence="6">Belongs to the TRAFAC class TrmE-Era-EngA-EngB-Septin-like GTPase superfamily. TrmE GTPase family.</text>
</comment>
<accession>Q923K4</accession>
<accession>Q58E73</accession>
<accession>Q99M99</accession>
<name>GTPB3_MOUSE</name>
<organism>
    <name type="scientific">Mus musculus</name>
    <name type="common">Mouse</name>
    <dbReference type="NCBI Taxonomy" id="10090"/>
    <lineage>
        <taxon>Eukaryota</taxon>
        <taxon>Metazoa</taxon>
        <taxon>Chordata</taxon>
        <taxon>Craniata</taxon>
        <taxon>Vertebrata</taxon>
        <taxon>Euteleostomi</taxon>
        <taxon>Mammalia</taxon>
        <taxon>Eutheria</taxon>
        <taxon>Euarchontoglires</taxon>
        <taxon>Glires</taxon>
        <taxon>Rodentia</taxon>
        <taxon>Myomorpha</taxon>
        <taxon>Muroidea</taxon>
        <taxon>Muridae</taxon>
        <taxon>Murinae</taxon>
        <taxon>Mus</taxon>
        <taxon>Mus</taxon>
    </lineage>
</organism>
<protein>
    <recommendedName>
        <fullName evidence="2">5-taurinomethyluridine-[tRNA] synthase subunit GTPB3, mitochondrial</fullName>
        <ecNumber evidence="2">3.6.1.-</ecNumber>
    </recommendedName>
    <alternativeName>
        <fullName>GTP-binding protein 3</fullName>
    </alternativeName>
    <alternativeName>
        <fullName>tRNA modification GTPase GTPBP3, mitochondrial</fullName>
    </alternativeName>
</protein>
<dbReference type="EC" id="3.6.1.-" evidence="2"/>
<dbReference type="EMBL" id="AF361482">
    <property type="protein sequence ID" value="AAK35216.2"/>
    <property type="molecule type" value="mRNA"/>
</dbReference>
<dbReference type="EMBL" id="AY029613">
    <property type="protein sequence ID" value="AAK60410.1"/>
    <property type="molecule type" value="Genomic_DNA"/>
</dbReference>
<dbReference type="EMBL" id="BC092042">
    <property type="protein sequence ID" value="AAH92042.1"/>
    <property type="molecule type" value="mRNA"/>
</dbReference>
<dbReference type="CCDS" id="CCDS40384.1">
    <molecule id="Q923K4-1"/>
</dbReference>
<dbReference type="RefSeq" id="NP_115933.2">
    <molecule id="Q923K4-1"/>
    <property type="nucleotide sequence ID" value="NM_032544.3"/>
</dbReference>
<dbReference type="SMR" id="Q923K4"/>
<dbReference type="BioGRID" id="214000">
    <property type="interactions" value="1"/>
</dbReference>
<dbReference type="FunCoup" id="Q923K4">
    <property type="interactions" value="2633"/>
</dbReference>
<dbReference type="STRING" id="10090.ENSMUSP00000007754"/>
<dbReference type="PhosphoSitePlus" id="Q923K4"/>
<dbReference type="PaxDb" id="10090-ENSMUSP00000007754"/>
<dbReference type="ProteomicsDB" id="271059">
    <molecule id="Q923K4-1"/>
</dbReference>
<dbReference type="ProteomicsDB" id="271060">
    <molecule id="Q923K4-2"/>
</dbReference>
<dbReference type="Pumba" id="Q923K4"/>
<dbReference type="Antibodypedia" id="27650">
    <property type="antibodies" value="107 antibodies from 20 providers"/>
</dbReference>
<dbReference type="DNASU" id="70359"/>
<dbReference type="Ensembl" id="ENSMUST00000007754.13">
    <molecule id="Q923K4-1"/>
    <property type="protein sequence ID" value="ENSMUSP00000007754.7"/>
    <property type="gene ID" value="ENSMUSG00000007610.17"/>
</dbReference>
<dbReference type="Ensembl" id="ENSMUST00000095259.10">
    <molecule id="Q923K4-2"/>
    <property type="protein sequence ID" value="ENSMUSP00000092892.4"/>
    <property type="gene ID" value="ENSMUSG00000007610.17"/>
</dbReference>
<dbReference type="Ensembl" id="ENSMUST00000150969.8">
    <molecule id="Q923K4-1"/>
    <property type="protein sequence ID" value="ENSMUSP00000114193.2"/>
    <property type="gene ID" value="ENSMUSG00000007610.17"/>
</dbReference>
<dbReference type="GeneID" id="70359"/>
<dbReference type="KEGG" id="mmu:70359"/>
<dbReference type="UCSC" id="uc009mdn.1">
    <molecule id="Q923K4-1"/>
    <property type="organism name" value="mouse"/>
</dbReference>
<dbReference type="AGR" id="MGI:1917609"/>
<dbReference type="CTD" id="84705"/>
<dbReference type="MGI" id="MGI:1917609">
    <property type="gene designation" value="Gtpbp3"/>
</dbReference>
<dbReference type="VEuPathDB" id="HostDB:ENSMUSG00000007610"/>
<dbReference type="eggNOG" id="KOG1191">
    <property type="taxonomic scope" value="Eukaryota"/>
</dbReference>
<dbReference type="GeneTree" id="ENSGT00390000016851"/>
<dbReference type="HOGENOM" id="CLU_019624_3_1_1"/>
<dbReference type="InParanoid" id="Q923K4"/>
<dbReference type="OMA" id="EFHCHGG"/>
<dbReference type="OrthoDB" id="74809at9989"/>
<dbReference type="PhylomeDB" id="Q923K4"/>
<dbReference type="TreeFam" id="TF313153"/>
<dbReference type="BioGRID-ORCS" id="70359">
    <property type="hits" value="13 hits in 79 CRISPR screens"/>
</dbReference>
<dbReference type="ChiTaRS" id="Gtpbp3">
    <property type="organism name" value="mouse"/>
</dbReference>
<dbReference type="PRO" id="PR:Q923K4"/>
<dbReference type="Proteomes" id="UP000000589">
    <property type="component" value="Chromosome 8"/>
</dbReference>
<dbReference type="RNAct" id="Q923K4">
    <property type="molecule type" value="protein"/>
</dbReference>
<dbReference type="Bgee" id="ENSMUSG00000007610">
    <property type="expression patterns" value="Expressed in ectoplacental cone and 195 other cell types or tissues"/>
</dbReference>
<dbReference type="ExpressionAtlas" id="Q923K4">
    <property type="expression patterns" value="baseline and differential"/>
</dbReference>
<dbReference type="GO" id="GO:0005739">
    <property type="term" value="C:mitochondrion"/>
    <property type="evidence" value="ECO:0007005"/>
    <property type="project" value="MGI"/>
</dbReference>
<dbReference type="GO" id="GO:1990234">
    <property type="term" value="C:transferase complex"/>
    <property type="evidence" value="ECO:0007669"/>
    <property type="project" value="Ensembl"/>
</dbReference>
<dbReference type="GO" id="GO:0005525">
    <property type="term" value="F:GTP binding"/>
    <property type="evidence" value="ECO:0007669"/>
    <property type="project" value="UniProtKB-KW"/>
</dbReference>
<dbReference type="GO" id="GO:0003924">
    <property type="term" value="F:GTPase activity"/>
    <property type="evidence" value="ECO:0000250"/>
    <property type="project" value="UniProtKB"/>
</dbReference>
<dbReference type="GO" id="GO:0160236">
    <property type="term" value="F:tRNA 5-taurinomethyluridine synthase activity"/>
    <property type="evidence" value="ECO:0000250"/>
    <property type="project" value="UniProtKB"/>
</dbReference>
<dbReference type="GO" id="GO:0070899">
    <property type="term" value="P:mitochondrial tRNA wobble uridine modification"/>
    <property type="evidence" value="ECO:0000250"/>
    <property type="project" value="UniProtKB"/>
</dbReference>
<dbReference type="CDD" id="cd04164">
    <property type="entry name" value="trmE"/>
    <property type="match status" value="1"/>
</dbReference>
<dbReference type="CDD" id="cd14858">
    <property type="entry name" value="TrmE_N"/>
    <property type="match status" value="1"/>
</dbReference>
<dbReference type="FunFam" id="3.30.1360.120:FF:000007">
    <property type="entry name" value="tRNA modification GTPase GTPBP3, mitochondrial"/>
    <property type="match status" value="1"/>
</dbReference>
<dbReference type="FunFam" id="3.40.50.300:FF:000924">
    <property type="entry name" value="tRNA modification GTPase GTPBP3, mitochondrial"/>
    <property type="match status" value="1"/>
</dbReference>
<dbReference type="Gene3D" id="3.40.50.300">
    <property type="entry name" value="P-loop containing nucleotide triphosphate hydrolases"/>
    <property type="match status" value="1"/>
</dbReference>
<dbReference type="Gene3D" id="3.30.1360.120">
    <property type="entry name" value="Probable tRNA modification gtpase trme, domain 1"/>
    <property type="match status" value="1"/>
</dbReference>
<dbReference type="Gene3D" id="1.20.120.430">
    <property type="entry name" value="tRNA modification GTPase MnmE domain 2"/>
    <property type="match status" value="1"/>
</dbReference>
<dbReference type="HAMAP" id="MF_00379">
    <property type="entry name" value="GTPase_MnmE"/>
    <property type="match status" value="1"/>
</dbReference>
<dbReference type="InterPro" id="IPR031168">
    <property type="entry name" value="G_TrmE"/>
</dbReference>
<dbReference type="InterPro" id="IPR006073">
    <property type="entry name" value="GTP-bd"/>
</dbReference>
<dbReference type="InterPro" id="IPR018948">
    <property type="entry name" value="GTP-bd_TrmE_N"/>
</dbReference>
<dbReference type="InterPro" id="IPR004520">
    <property type="entry name" value="GTPase_MnmE"/>
</dbReference>
<dbReference type="InterPro" id="IPR027368">
    <property type="entry name" value="MnmE_dom2"/>
</dbReference>
<dbReference type="InterPro" id="IPR025867">
    <property type="entry name" value="MnmE_helical"/>
</dbReference>
<dbReference type="InterPro" id="IPR027417">
    <property type="entry name" value="P-loop_NTPase"/>
</dbReference>
<dbReference type="InterPro" id="IPR005225">
    <property type="entry name" value="Small_GTP-bd"/>
</dbReference>
<dbReference type="InterPro" id="IPR027266">
    <property type="entry name" value="TrmE/GcvT_dom1"/>
</dbReference>
<dbReference type="NCBIfam" id="TIGR00450">
    <property type="entry name" value="mnmE_trmE_thdF"/>
    <property type="match status" value="1"/>
</dbReference>
<dbReference type="NCBIfam" id="NF003661">
    <property type="entry name" value="PRK05291.1-3"/>
    <property type="match status" value="1"/>
</dbReference>
<dbReference type="NCBIfam" id="TIGR00231">
    <property type="entry name" value="small_GTP"/>
    <property type="match status" value="1"/>
</dbReference>
<dbReference type="PANTHER" id="PTHR42714">
    <property type="entry name" value="TRNA MODIFICATION GTPASE GTPBP3"/>
    <property type="match status" value="1"/>
</dbReference>
<dbReference type="PANTHER" id="PTHR42714:SF2">
    <property type="entry name" value="TRNA MODIFICATION GTPASE GTPBP3, MITOCHONDRIAL"/>
    <property type="match status" value="1"/>
</dbReference>
<dbReference type="Pfam" id="PF01926">
    <property type="entry name" value="MMR_HSR1"/>
    <property type="match status" value="1"/>
</dbReference>
<dbReference type="Pfam" id="PF12631">
    <property type="entry name" value="MnmE_helical"/>
    <property type="match status" value="1"/>
</dbReference>
<dbReference type="Pfam" id="PF10396">
    <property type="entry name" value="TrmE_N"/>
    <property type="match status" value="1"/>
</dbReference>
<dbReference type="SUPFAM" id="SSF52540">
    <property type="entry name" value="P-loop containing nucleoside triphosphate hydrolases"/>
    <property type="match status" value="1"/>
</dbReference>
<dbReference type="SUPFAM" id="SSF116878">
    <property type="entry name" value="TrmE connector domain"/>
    <property type="match status" value="1"/>
</dbReference>
<dbReference type="PROSITE" id="PS51709">
    <property type="entry name" value="G_TRME"/>
    <property type="match status" value="1"/>
</dbReference>
<gene>
    <name evidence="7" type="primary">Gtpbp3</name>
</gene>
<reference key="1">
    <citation type="journal article" date="2003" name="Biochem. Biophys. Res. Commun.">
        <title>Identification and characterization of mouse GTPBP3 gene encoding a mitochondrial GTP-binding protein involved in tRNA modification.</title>
        <authorList>
            <person name="Li X."/>
            <person name="Guan M.-X."/>
        </authorList>
    </citation>
    <scope>NUCLEOTIDE SEQUENCE [GENOMIC DNA / MRNA] (ISOFORM 1)</scope>
    <scope>SUBCELLULAR LOCATION</scope>
    <scope>TISSUE SPECIFICITY</scope>
</reference>
<reference key="2">
    <citation type="journal article" date="2004" name="Genome Res.">
        <title>The status, quality, and expansion of the NIH full-length cDNA project: the Mammalian Gene Collection (MGC).</title>
        <authorList>
            <consortium name="The MGC Project Team"/>
        </authorList>
    </citation>
    <scope>NUCLEOTIDE SEQUENCE [LARGE SCALE MRNA] (ISOFORM 2)</scope>
    <source>
        <strain>FVB/N-3</strain>
        <tissue>Mammary tumor</tissue>
    </source>
</reference>